<name>PAT08_SOLTU</name>
<evidence type="ECO:0000250" key="1"/>
<evidence type="ECO:0000255" key="2"/>
<evidence type="ECO:0000255" key="3">
    <source>
        <dbReference type="PROSITE-ProRule" id="PRU01161"/>
    </source>
</evidence>
<evidence type="ECO:0000269" key="4">
    <source>
    </source>
</evidence>
<evidence type="ECO:0000305" key="5"/>
<comment type="function">
    <text evidence="1">Probable lipolytic acyl hydrolase (LAH), an activity which is thought to be involved in the response of tubers to pathogens.</text>
</comment>
<comment type="subcellular location">
    <subcellularLocation>
        <location evidence="1">Vacuole</location>
    </subcellularLocation>
</comment>
<comment type="tissue specificity">
    <text evidence="4">Tuber.</text>
</comment>
<comment type="developmental stage">
    <text evidence="4">Accumulates progressively during tuber formation from stolon.</text>
</comment>
<comment type="domain">
    <text>The nitrogen atoms of the two glycine residues in the GGXR motif define the oxyanion hole, and stabilize the oxyanion that forms during the nucleophilic attack by the catalytic serine during substrate cleavage.</text>
</comment>
<comment type="miscellaneous">
    <text>Patatin have a dual role as a somatic storage protein and as an enzyme involved in host resistance.</text>
</comment>
<comment type="similarity">
    <text evidence="5">Belongs to the patatin family.</text>
</comment>
<keyword id="KW-0175">Coiled coil</keyword>
<keyword id="KW-0325">Glycoprotein</keyword>
<keyword id="KW-0378">Hydrolase</keyword>
<keyword id="KW-0442">Lipid degradation</keyword>
<keyword id="KW-0443">Lipid metabolism</keyword>
<keyword id="KW-0611">Plant defense</keyword>
<keyword id="KW-1185">Reference proteome</keyword>
<keyword id="KW-0732">Signal</keyword>
<keyword id="KW-0758">Storage protein</keyword>
<keyword id="KW-0926">Vacuole</keyword>
<proteinExistence type="evidence at transcript level"/>
<organism>
    <name type="scientific">Solanum tuberosum</name>
    <name type="common">Potato</name>
    <dbReference type="NCBI Taxonomy" id="4113"/>
    <lineage>
        <taxon>Eukaryota</taxon>
        <taxon>Viridiplantae</taxon>
        <taxon>Streptophyta</taxon>
        <taxon>Embryophyta</taxon>
        <taxon>Tracheophyta</taxon>
        <taxon>Spermatophyta</taxon>
        <taxon>Magnoliopsida</taxon>
        <taxon>eudicotyledons</taxon>
        <taxon>Gunneridae</taxon>
        <taxon>Pentapetalae</taxon>
        <taxon>asterids</taxon>
        <taxon>lamiids</taxon>
        <taxon>Solanales</taxon>
        <taxon>Solanaceae</taxon>
        <taxon>Solanoideae</taxon>
        <taxon>Solaneae</taxon>
        <taxon>Solanum</taxon>
    </lineage>
</organism>
<sequence length="387" mass="42686">MATTKSFLILIVMILATTSSTFASLEEMVTVLSIDGGGIKGIIPGTILEFLEGQLQKMDNNADARLADYFDVIGGTSTGGLLTSMITTPNENNRPFAAANEIVPFFFEHGPHIFNSSTGQFFGPKYDGKYLMQVLQENLGETRVHQALTEVAISSFDIKTNKPVIFTKSNLAKSPELDAKMYDICYSTAAAPTYFPPHYFTTNTINGDKYEFNLVDGAVATVADPALLSISVATRLAEKDPAFASIRSLNYKKMLLLSLGTGTTSEFDKTYTAEETAKWGAIQWMLVIQRMTDAASSYMTDYYLSTVFQAQNSQKNYLRVQENALTGTTTEMDDASEANMESLVQVGENLLKKPVSKDNPETYEEALKRFAKLLSDRKKLRANKASY</sequence>
<accession>Q2MY43</accession>
<protein>
    <recommendedName>
        <fullName>Patatin-08</fullName>
        <ecNumber>3.1.1.-</ecNumber>
    </recommendedName>
    <alternativeName>
        <fullName>Patatin group D-1</fullName>
    </alternativeName>
</protein>
<dbReference type="EC" id="3.1.1.-"/>
<dbReference type="EMBL" id="DQ274481">
    <property type="protein sequence ID" value="ABC55681.1"/>
    <property type="molecule type" value="mRNA"/>
</dbReference>
<dbReference type="EMBL" id="DQ274495">
    <property type="protein sequence ID" value="ABC55695.1"/>
    <property type="molecule type" value="mRNA"/>
</dbReference>
<dbReference type="SMR" id="Q2MY43"/>
<dbReference type="InParanoid" id="Q2MY43"/>
<dbReference type="Proteomes" id="UP000011115">
    <property type="component" value="Unassembled WGS sequence"/>
</dbReference>
<dbReference type="ExpressionAtlas" id="Q2MY43">
    <property type="expression patterns" value="baseline"/>
</dbReference>
<dbReference type="GO" id="GO:0005773">
    <property type="term" value="C:vacuole"/>
    <property type="evidence" value="ECO:0007669"/>
    <property type="project" value="UniProtKB-SubCell"/>
</dbReference>
<dbReference type="GO" id="GO:0047372">
    <property type="term" value="F:monoacylglycerol lipase activity"/>
    <property type="evidence" value="ECO:0000318"/>
    <property type="project" value="GO_Central"/>
</dbReference>
<dbReference type="GO" id="GO:0045735">
    <property type="term" value="F:nutrient reservoir activity"/>
    <property type="evidence" value="ECO:0007669"/>
    <property type="project" value="UniProtKB-KW"/>
</dbReference>
<dbReference type="GO" id="GO:0004620">
    <property type="term" value="F:phospholipase activity"/>
    <property type="evidence" value="ECO:0000318"/>
    <property type="project" value="GO_Central"/>
</dbReference>
<dbReference type="GO" id="GO:0006952">
    <property type="term" value="P:defense response"/>
    <property type="evidence" value="ECO:0007669"/>
    <property type="project" value="UniProtKB-KW"/>
</dbReference>
<dbReference type="GO" id="GO:0016042">
    <property type="term" value="P:lipid catabolic process"/>
    <property type="evidence" value="ECO:0007669"/>
    <property type="project" value="UniProtKB-KW"/>
</dbReference>
<dbReference type="Gene3D" id="3.40.1090.10">
    <property type="entry name" value="Cytosolic phospholipase A2 catalytic domain"/>
    <property type="match status" value="1"/>
</dbReference>
<dbReference type="InterPro" id="IPR016035">
    <property type="entry name" value="Acyl_Trfase/lysoPLipase"/>
</dbReference>
<dbReference type="InterPro" id="IPR002641">
    <property type="entry name" value="PNPLA_dom"/>
</dbReference>
<dbReference type="PANTHER" id="PTHR32176:SF85">
    <property type="entry name" value="PATATIN GROUP D-2"/>
    <property type="match status" value="1"/>
</dbReference>
<dbReference type="PANTHER" id="PTHR32176">
    <property type="entry name" value="XYLOSE ISOMERASE"/>
    <property type="match status" value="1"/>
</dbReference>
<dbReference type="Pfam" id="PF01734">
    <property type="entry name" value="Patatin"/>
    <property type="match status" value="1"/>
</dbReference>
<dbReference type="SUPFAM" id="SSF52151">
    <property type="entry name" value="FabD/lysophospholipase-like"/>
    <property type="match status" value="1"/>
</dbReference>
<dbReference type="PROSITE" id="PS51635">
    <property type="entry name" value="PNPLA"/>
    <property type="match status" value="1"/>
</dbReference>
<feature type="signal peptide" evidence="2">
    <location>
        <begin position="1"/>
        <end position="23"/>
    </location>
</feature>
<feature type="chain" id="PRO_0000296694" description="Patatin-08">
    <location>
        <begin position="24"/>
        <end position="387"/>
    </location>
</feature>
<feature type="domain" description="PNPLA" evidence="3">
    <location>
        <begin position="32"/>
        <end position="230"/>
    </location>
</feature>
<feature type="coiled-coil region" evidence="2">
    <location>
        <begin position="361"/>
        <end position="385"/>
    </location>
</feature>
<feature type="short sequence motif" description="GXGXXG" evidence="3">
    <location>
        <begin position="36"/>
        <end position="41"/>
    </location>
</feature>
<feature type="short sequence motif" description="GXSXG" evidence="3">
    <location>
        <begin position="75"/>
        <end position="79"/>
    </location>
</feature>
<feature type="short sequence motif" description="DGA/G" evidence="3">
    <location>
        <begin position="216"/>
        <end position="218"/>
    </location>
</feature>
<feature type="active site" description="Nucleophile" evidence="3">
    <location>
        <position position="77"/>
    </location>
</feature>
<feature type="active site" description="Proton acceptor" evidence="3">
    <location>
        <position position="216"/>
    </location>
</feature>
<feature type="glycosylation site" description="N-linked (GlcNAc...) asparagine" evidence="2">
    <location>
        <position position="115"/>
    </location>
</feature>
<reference key="1">
    <citation type="journal article" date="2006" name="Genetics">
        <title>Structural diversity and differential transcription of the patatin multicopy gene family during potato tuber development.</title>
        <authorList>
            <person name="Stupar R.M."/>
            <person name="Beaubien K.A."/>
            <person name="Jin W."/>
            <person name="Song J."/>
            <person name="Lee M.-K."/>
            <person name="Wu C."/>
            <person name="Zhang H.-B."/>
            <person name="Han B."/>
            <person name="Jiang J."/>
        </authorList>
    </citation>
    <scope>NUCLEOTIDE SEQUENCE [MRNA]</scope>
    <scope>DEVELOPMENTAL STAGE</scope>
    <scope>TISSUE SPECIFICITY</scope>
    <source>
        <strain>cv. Kennebec</strain>
    </source>
</reference>